<accession>Q5W280</accession>
<feature type="signal peptide" evidence="2">
    <location>
        <begin position="1"/>
        <end position="19"/>
    </location>
</feature>
<feature type="chain" id="PRO_0000265778" description="Prokineticin Bo8">
    <location>
        <begin position="20"/>
        <end position="96"/>
    </location>
</feature>
<feature type="disulfide bond" evidence="1">
    <location>
        <begin position="26"/>
        <end position="38"/>
    </location>
</feature>
<feature type="disulfide bond" evidence="1">
    <location>
        <begin position="32"/>
        <end position="50"/>
    </location>
</feature>
<feature type="disulfide bond" evidence="1">
    <location>
        <begin position="37"/>
        <end position="78"/>
    </location>
</feature>
<feature type="disulfide bond" evidence="1">
    <location>
        <begin position="60"/>
        <end position="86"/>
    </location>
</feature>
<feature type="disulfide bond" evidence="1">
    <location>
        <begin position="80"/>
        <end position="95"/>
    </location>
</feature>
<evidence type="ECO:0000250" key="1">
    <source>
        <dbReference type="UniProtKB" id="Q9PW66"/>
    </source>
</evidence>
<evidence type="ECO:0000269" key="2">
    <source>
    </source>
</evidence>
<evidence type="ECO:0000305" key="3"/>
<organism>
    <name type="scientific">Bombina orientalis</name>
    <name type="common">Oriental fire-bellied toad</name>
    <dbReference type="NCBI Taxonomy" id="8346"/>
    <lineage>
        <taxon>Eukaryota</taxon>
        <taxon>Metazoa</taxon>
        <taxon>Chordata</taxon>
        <taxon>Craniata</taxon>
        <taxon>Vertebrata</taxon>
        <taxon>Euteleostomi</taxon>
        <taxon>Amphibia</taxon>
        <taxon>Batrachia</taxon>
        <taxon>Anura</taxon>
        <taxon>Bombinatoridae</taxon>
        <taxon>Bombina</taxon>
    </lineage>
</organism>
<dbReference type="EMBL" id="AJ812217">
    <property type="protein sequence ID" value="CAH23218.1"/>
    <property type="molecule type" value="mRNA"/>
</dbReference>
<dbReference type="SMR" id="Q5W280"/>
<dbReference type="GO" id="GO:0005576">
    <property type="term" value="C:extracellular region"/>
    <property type="evidence" value="ECO:0007669"/>
    <property type="project" value="UniProtKB-SubCell"/>
</dbReference>
<dbReference type="GO" id="GO:0090729">
    <property type="term" value="F:toxin activity"/>
    <property type="evidence" value="ECO:0007669"/>
    <property type="project" value="UniProtKB-KW"/>
</dbReference>
<dbReference type="GO" id="GO:0001935">
    <property type="term" value="P:endothelial cell proliferation"/>
    <property type="evidence" value="ECO:0007669"/>
    <property type="project" value="TreeGrafter"/>
</dbReference>
<dbReference type="Gene3D" id="2.10.80.10">
    <property type="entry name" value="Lipase, subunit A"/>
    <property type="match status" value="1"/>
</dbReference>
<dbReference type="InterPro" id="IPR009523">
    <property type="entry name" value="Prokineticin"/>
</dbReference>
<dbReference type="InterPro" id="IPR023569">
    <property type="entry name" value="Prokineticin_domain"/>
</dbReference>
<dbReference type="PANTHER" id="PTHR18821">
    <property type="entry name" value="PROKINETICIN"/>
    <property type="match status" value="1"/>
</dbReference>
<dbReference type="PANTHER" id="PTHR18821:SF7">
    <property type="entry name" value="PROKINETICIN-1"/>
    <property type="match status" value="1"/>
</dbReference>
<dbReference type="Pfam" id="PF06607">
    <property type="entry name" value="Prokineticin"/>
    <property type="match status" value="1"/>
</dbReference>
<dbReference type="SUPFAM" id="SSF57190">
    <property type="entry name" value="Colipase-like"/>
    <property type="match status" value="2"/>
</dbReference>
<keyword id="KW-0903">Direct protein sequencing</keyword>
<keyword id="KW-1015">Disulfide bond</keyword>
<keyword id="KW-1213">G-protein coupled receptor impairing toxin</keyword>
<keyword id="KW-0964">Secreted</keyword>
<keyword id="KW-0732">Signal</keyword>
<keyword id="KW-0800">Toxin</keyword>
<name>BO8_BOMOR</name>
<sequence>MKCFAQIVVLLLVIAFSHGAVITGACDRDVQCGSGTCCAASAWSRNIRFCVPLGNSGEECHPASHKVPYDGKRLSSLCPCKSGLTCSKSGAKFQCS</sequence>
<reference key="1">
    <citation type="journal article" date="2005" name="Peptides">
        <title>Molecular cloning of mRNA from toad granular gland secretion and lyophilized skin: identification of Bo8-a novel prokineticin from Bombina orientalis.</title>
        <authorList>
            <person name="Chen T."/>
            <person name="Xue Y."/>
            <person name="Zhou M."/>
            <person name="Shaw C."/>
        </authorList>
    </citation>
    <scope>NUCLEOTIDE SEQUENCE [MRNA]</scope>
    <scope>PROTEIN SEQUENCE OF 20-42</scope>
    <scope>MASS SPECTROMETRY</scope>
    <source>
        <tissue>Skin secretion</tissue>
    </source>
</reference>
<protein>
    <recommendedName>
        <fullName>Prokineticin Bo8</fullName>
    </recommendedName>
</protein>
<proteinExistence type="evidence at protein level"/>
<comment type="function">
    <text evidence="1">Potent agonist for both PKR1/PROKR1 and PKR2/PROKR2, and inducer of a potent and long-lasting hyperalgesia. Also potentiates capsaicin-induced TRPV1 current, when tested on DRG neurons. At subnanomolar concentrations, this protein both induces potent chemotaxis of macrophages and stimulates LPS-induced production of the pro-inflammatory cytokines IL-1 and IL-12. In vivo, potently stimulates the contraction of the guinea-pig gastrointestinal (GI) smooth muscle (nanomolar concentration).</text>
</comment>
<comment type="subcellular location">
    <subcellularLocation>
        <location>Secreted</location>
    </subcellularLocation>
</comment>
<comment type="tissue specificity">
    <text>Expressed by the skin glands.</text>
</comment>
<comment type="mass spectrometry"/>
<comment type="similarity">
    <text evidence="3">Belongs to the AVIT (prokineticin) family.</text>
</comment>